<organism>
    <name type="scientific">Influenza A virus (strain A/Memphis/4/1980 H3N2)</name>
    <dbReference type="NCBI Taxonomy" id="383578"/>
    <lineage>
        <taxon>Viruses</taxon>
        <taxon>Riboviria</taxon>
        <taxon>Orthornavirae</taxon>
        <taxon>Negarnaviricota</taxon>
        <taxon>Polyploviricotina</taxon>
        <taxon>Insthoviricetes</taxon>
        <taxon>Articulavirales</taxon>
        <taxon>Orthomyxoviridae</taxon>
        <taxon>Alphainfluenzavirus</taxon>
        <taxon>Alphainfluenzavirus influenzae</taxon>
        <taxon>Influenza A virus</taxon>
    </lineage>
</organism>
<comment type="function">
    <text evidence="1">Plays an important role in promoting lung pathology in both primary viral infection and secondary bacterial infection. Promotes alteration of mitochondrial morphology, dissipation of mitochondrial membrane potential, and cell death. Alternatively, inhibits the production of interferon in the infected cell at the level of host mitochondrial antiviral signaling MAVS. Its level of expression differs greatly depending on which cell type is infected, in a manner that is independent of the levels of expression of other viral proteins. Monocytic cells are more affected than epithelial cells. Seems to disable virus-infected monocytes or other host innate immune cells. During early stage of infection, predisposes the mitochondria to permeability transition through interaction with host SLC25A6/ANT3 and VDAC1. These proteins participate in the formation of the permeability transition pore complex (PTPC) responsible of the release of mitochondrial products that triggers apoptosis.</text>
</comment>
<comment type="subunit">
    <text evidence="1">Oligomer. Interacts with human SLC25A6/ANT3 and VDAC1. Interacts with host MAVS.</text>
</comment>
<comment type="subcellular location">
    <subcellularLocation>
        <location evidence="1">Host mitochondrion inner membrane</location>
    </subcellularLocation>
    <subcellularLocation>
        <location evidence="1">Host nucleus</location>
    </subcellularLocation>
    <subcellularLocation>
        <location evidence="1">Host cytoplasm</location>
        <location evidence="1">Host cytosol</location>
    </subcellularLocation>
    <text evidence="1">Inner mitochondrial membrane in most cells types. Otherwise is detected in the nucleus and cytosol.</text>
</comment>
<comment type="miscellaneous">
    <text>Is not encoded in all strains, and seems to be dispensable for replication.</text>
</comment>
<comment type="similarity">
    <text evidence="1">Belongs to the influenza viruses PB1-F2 family.</text>
</comment>
<dbReference type="EMBL" id="CY007625">
    <property type="protein sequence ID" value="ABC46574.1"/>
    <property type="molecule type" value="Genomic_RNA"/>
</dbReference>
<dbReference type="SMR" id="Q2RCG7"/>
<dbReference type="Proteomes" id="UP000008577">
    <property type="component" value="Genome"/>
</dbReference>
<dbReference type="GO" id="GO:0044164">
    <property type="term" value="C:host cell cytosol"/>
    <property type="evidence" value="ECO:0007669"/>
    <property type="project" value="UniProtKB-SubCell"/>
</dbReference>
<dbReference type="GO" id="GO:0044192">
    <property type="term" value="C:host cell mitochondrial inner membrane"/>
    <property type="evidence" value="ECO:0007669"/>
    <property type="project" value="UniProtKB-SubCell"/>
</dbReference>
<dbReference type="GO" id="GO:0042025">
    <property type="term" value="C:host cell nucleus"/>
    <property type="evidence" value="ECO:0007669"/>
    <property type="project" value="UniProtKB-SubCell"/>
</dbReference>
<dbReference type="GO" id="GO:0016020">
    <property type="term" value="C:membrane"/>
    <property type="evidence" value="ECO:0007669"/>
    <property type="project" value="UniProtKB-UniRule"/>
</dbReference>
<dbReference type="GO" id="GO:0052150">
    <property type="term" value="P:symbiont-mediated perturbation of host apoptosis"/>
    <property type="evidence" value="ECO:0007669"/>
    <property type="project" value="UniProtKB-KW"/>
</dbReference>
<dbReference type="GO" id="GO:0039545">
    <property type="term" value="P:symbiont-mediated suppression of host cytoplasmic pattern recognition receptor signaling pathway via inhibition of MAVS activity"/>
    <property type="evidence" value="ECO:0007669"/>
    <property type="project" value="UniProtKB-KW"/>
</dbReference>
<dbReference type="HAMAP" id="MF_04064">
    <property type="entry name" value="INFV_PB1F2"/>
    <property type="match status" value="1"/>
</dbReference>
<dbReference type="InterPro" id="IPR021045">
    <property type="entry name" value="Flu_proapoptotic_PB1-F2"/>
</dbReference>
<dbReference type="Pfam" id="PF11986">
    <property type="entry name" value="PB1-F2"/>
    <property type="match status" value="1"/>
</dbReference>
<accession>Q2RCG7</accession>
<name>PB1F2_I80A4</name>
<keyword id="KW-0053">Apoptosis</keyword>
<keyword id="KW-1035">Host cytoplasm</keyword>
<keyword id="KW-1043">Host membrane</keyword>
<keyword id="KW-1045">Host mitochondrion</keyword>
<keyword id="KW-1046">Host mitochondrion inner membrane</keyword>
<keyword id="KW-1048">Host nucleus</keyword>
<keyword id="KW-0945">Host-virus interaction</keyword>
<keyword id="KW-1090">Inhibition of host innate immune response by virus</keyword>
<keyword id="KW-1097">Inhibition of host MAVS by virus</keyword>
<keyword id="KW-1113">Inhibition of host RLR pathway by virus</keyword>
<keyword id="KW-0472">Membrane</keyword>
<keyword id="KW-1119">Modulation of host cell apoptosis by virus</keyword>
<keyword id="KW-0899">Viral immunoevasion</keyword>
<protein>
    <recommendedName>
        <fullName evidence="1">Protein PB1-F2</fullName>
    </recommendedName>
</protein>
<evidence type="ECO:0000255" key="1">
    <source>
        <dbReference type="HAMAP-Rule" id="MF_04064"/>
    </source>
</evidence>
<evidence type="ECO:0000256" key="2">
    <source>
        <dbReference type="SAM" id="MobiDB-lite"/>
    </source>
</evidence>
<sequence length="90" mass="10722">MEQEQDTPWTQSTEHINIQKKGSGQQTQKLGRPNLTRLMDHYLRIMSQVDMHKQTVSWKLWLSLRNPTQGSLRTRALKQWKSFNKQGWTN</sequence>
<gene>
    <name evidence="1" type="primary">PB1</name>
</gene>
<reference key="1">
    <citation type="submission" date="2005-12" db="EMBL/GenBank/DDBJ databases">
        <title>The NIAID influenza genome sequencing project.</title>
        <authorList>
            <person name="Ghedin E."/>
            <person name="Spiro D."/>
            <person name="Miller N."/>
            <person name="Zaborsky J."/>
            <person name="Feldblyum T."/>
            <person name="Subbu V."/>
            <person name="Shumway M."/>
            <person name="Sparenborg J."/>
            <person name="Groveman L."/>
            <person name="Halpin R."/>
            <person name="Sitz J."/>
            <person name="Koo H."/>
            <person name="Salzberg S.L."/>
            <person name="Webster R.G."/>
            <person name="Hoffmann E."/>
            <person name="Krauss S."/>
            <person name="Naeve C."/>
            <person name="Bao Y."/>
            <person name="Bolotov P."/>
            <person name="Dernovoy D."/>
            <person name="Kiryutin B."/>
            <person name="Lipman D.J."/>
            <person name="Tatusova T."/>
        </authorList>
    </citation>
    <scope>NUCLEOTIDE SEQUENCE [GENOMIC RNA]</scope>
</reference>
<proteinExistence type="inferred from homology"/>
<feature type="chain" id="PRO_0000278715" description="Protein PB1-F2">
    <location>
        <begin position="1"/>
        <end position="90"/>
    </location>
</feature>
<feature type="region of interest" description="Disordered" evidence="2">
    <location>
        <begin position="1"/>
        <end position="31"/>
    </location>
</feature>
<feature type="region of interest" description="Mitochondrial targeting sequence" evidence="1">
    <location>
        <begin position="65"/>
        <end position="87"/>
    </location>
</feature>
<feature type="compositionally biased region" description="Polar residues" evidence="2">
    <location>
        <begin position="1"/>
        <end position="29"/>
    </location>
</feature>
<feature type="site" description="Low pathogenicity" evidence="1">
    <location>
        <position position="66"/>
    </location>
</feature>
<organismHost>
    <name type="scientific">Aves</name>
    <dbReference type="NCBI Taxonomy" id="8782"/>
</organismHost>
<organismHost>
    <name type="scientific">Cetacea</name>
    <name type="common">whales</name>
    <dbReference type="NCBI Taxonomy" id="9721"/>
</organismHost>
<organismHost>
    <name type="scientific">Homo sapiens</name>
    <name type="common">Human</name>
    <dbReference type="NCBI Taxonomy" id="9606"/>
</organismHost>
<organismHost>
    <name type="scientific">Phocidae</name>
    <name type="common">true seals</name>
    <dbReference type="NCBI Taxonomy" id="9709"/>
</organismHost>
<organismHost>
    <name type="scientific">Sus scrofa</name>
    <name type="common">Pig</name>
    <dbReference type="NCBI Taxonomy" id="9823"/>
</organismHost>